<name>RIMK_PSEPG</name>
<comment type="cofactor">
    <cofactor evidence="1">
        <name>Mg(2+)</name>
        <dbReference type="ChEBI" id="CHEBI:18420"/>
    </cofactor>
    <cofactor evidence="1">
        <name>Mn(2+)</name>
        <dbReference type="ChEBI" id="CHEBI:29035"/>
    </cofactor>
    <text evidence="1">Binds 2 magnesium or manganese ions per subunit.</text>
</comment>
<comment type="similarity">
    <text evidence="1">Belongs to the RimK family.</text>
</comment>
<evidence type="ECO:0000255" key="1">
    <source>
        <dbReference type="HAMAP-Rule" id="MF_01552"/>
    </source>
</evidence>
<organism>
    <name type="scientific">Pseudomonas putida (strain GB-1)</name>
    <dbReference type="NCBI Taxonomy" id="76869"/>
    <lineage>
        <taxon>Bacteria</taxon>
        <taxon>Pseudomonadati</taxon>
        <taxon>Pseudomonadota</taxon>
        <taxon>Gammaproteobacteria</taxon>
        <taxon>Pseudomonadales</taxon>
        <taxon>Pseudomonadaceae</taxon>
        <taxon>Pseudomonas</taxon>
    </lineage>
</organism>
<feature type="chain" id="PRO_1000087749" description="Probable alpha-L-glutamate ligase">
    <location>
        <begin position="1"/>
        <end position="301"/>
    </location>
</feature>
<feature type="domain" description="ATP-grasp" evidence="1">
    <location>
        <begin position="104"/>
        <end position="287"/>
    </location>
</feature>
<feature type="binding site" evidence="1">
    <location>
        <position position="141"/>
    </location>
    <ligand>
        <name>ATP</name>
        <dbReference type="ChEBI" id="CHEBI:30616"/>
    </ligand>
</feature>
<feature type="binding site" evidence="1">
    <location>
        <begin position="178"/>
        <end position="179"/>
    </location>
    <ligand>
        <name>ATP</name>
        <dbReference type="ChEBI" id="CHEBI:30616"/>
    </ligand>
</feature>
<feature type="binding site" evidence="1">
    <location>
        <position position="187"/>
    </location>
    <ligand>
        <name>ATP</name>
        <dbReference type="ChEBI" id="CHEBI:30616"/>
    </ligand>
</feature>
<feature type="binding site" evidence="1">
    <location>
        <begin position="211"/>
        <end position="213"/>
    </location>
    <ligand>
        <name>ATP</name>
        <dbReference type="ChEBI" id="CHEBI:30616"/>
    </ligand>
</feature>
<feature type="binding site" evidence="1">
    <location>
        <position position="248"/>
    </location>
    <ligand>
        <name>Mg(2+)</name>
        <dbReference type="ChEBI" id="CHEBI:18420"/>
        <label>1</label>
    </ligand>
</feature>
<feature type="binding site" evidence="1">
    <location>
        <position position="248"/>
    </location>
    <ligand>
        <name>Mn(2+)</name>
        <dbReference type="ChEBI" id="CHEBI:29035"/>
        <label>1</label>
    </ligand>
</feature>
<feature type="binding site" evidence="1">
    <location>
        <position position="260"/>
    </location>
    <ligand>
        <name>Mg(2+)</name>
        <dbReference type="ChEBI" id="CHEBI:18420"/>
        <label>1</label>
    </ligand>
</feature>
<feature type="binding site" evidence="1">
    <location>
        <position position="260"/>
    </location>
    <ligand>
        <name>Mg(2+)</name>
        <dbReference type="ChEBI" id="CHEBI:18420"/>
        <label>2</label>
    </ligand>
</feature>
<feature type="binding site" evidence="1">
    <location>
        <position position="260"/>
    </location>
    <ligand>
        <name>Mn(2+)</name>
        <dbReference type="ChEBI" id="CHEBI:29035"/>
        <label>1</label>
    </ligand>
</feature>
<feature type="binding site" evidence="1">
    <location>
        <position position="260"/>
    </location>
    <ligand>
        <name>Mn(2+)</name>
        <dbReference type="ChEBI" id="CHEBI:29035"/>
        <label>2</label>
    </ligand>
</feature>
<feature type="binding site" evidence="1">
    <location>
        <position position="262"/>
    </location>
    <ligand>
        <name>Mg(2+)</name>
        <dbReference type="ChEBI" id="CHEBI:18420"/>
        <label>2</label>
    </ligand>
</feature>
<feature type="binding site" evidence="1">
    <location>
        <position position="262"/>
    </location>
    <ligand>
        <name>Mn(2+)</name>
        <dbReference type="ChEBI" id="CHEBI:29035"/>
        <label>2</label>
    </ligand>
</feature>
<keyword id="KW-0067">ATP-binding</keyword>
<keyword id="KW-0436">Ligase</keyword>
<keyword id="KW-0460">Magnesium</keyword>
<keyword id="KW-0464">Manganese</keyword>
<keyword id="KW-0479">Metal-binding</keyword>
<keyword id="KW-0547">Nucleotide-binding</keyword>
<keyword id="KW-0648">Protein biosynthesis</keyword>
<sequence length="301" mass="32645">MKIAVLSRNPRLYSTRRLVEAGIQRGHEMVVIDTLRAYMNIASHKPQIHYRGKPLEGFDAVIPRIGASVTFYGCAVLRQFEMMGVYPLNESVAIARSRDKLRSLQLLSRRGIGLPITGFAHSPDDIPDLIQMVNGAPLVIKVLEGTQGIGVVLCETTQAAESVIEAFMGLKQNIMVQEYIKEAGGADIRCFVVGDKVIASMKRQAKPGEFRSNLHRGGVASLIKITPEERITAIRAAKVMGLSVAGVDILRSNHGPLVMEVNSSPGLEGIEVTTGKNVAGMIIEHLEKNGGPNQTRTKGKG</sequence>
<reference key="1">
    <citation type="submission" date="2008-01" db="EMBL/GenBank/DDBJ databases">
        <title>Complete sequence of Pseudomonas putida GB-1.</title>
        <authorList>
            <consortium name="US DOE Joint Genome Institute"/>
            <person name="Copeland A."/>
            <person name="Lucas S."/>
            <person name="Lapidus A."/>
            <person name="Barry K."/>
            <person name="Glavina del Rio T."/>
            <person name="Dalin E."/>
            <person name="Tice H."/>
            <person name="Pitluck S."/>
            <person name="Bruce D."/>
            <person name="Goodwin L."/>
            <person name="Chertkov O."/>
            <person name="Brettin T."/>
            <person name="Detter J.C."/>
            <person name="Han C."/>
            <person name="Kuske C.R."/>
            <person name="Schmutz J."/>
            <person name="Larimer F."/>
            <person name="Land M."/>
            <person name="Hauser L."/>
            <person name="Kyrpides N."/>
            <person name="Kim E."/>
            <person name="McCarthy J.K."/>
            <person name="Richardson P."/>
        </authorList>
    </citation>
    <scope>NUCLEOTIDE SEQUENCE [LARGE SCALE GENOMIC DNA]</scope>
    <source>
        <strain>GB-1</strain>
    </source>
</reference>
<proteinExistence type="inferred from homology"/>
<protein>
    <recommendedName>
        <fullName evidence="1">Probable alpha-L-glutamate ligase</fullName>
        <ecNumber evidence="1">6.3.2.-</ecNumber>
    </recommendedName>
</protein>
<gene>
    <name evidence="1" type="primary">rimK</name>
    <name type="ordered locus">PputGB1_0273</name>
</gene>
<dbReference type="EC" id="6.3.2.-" evidence="1"/>
<dbReference type="EMBL" id="CP000926">
    <property type="protein sequence ID" value="ABY96186.1"/>
    <property type="molecule type" value="Genomic_DNA"/>
</dbReference>
<dbReference type="RefSeq" id="WP_008099005.1">
    <property type="nucleotide sequence ID" value="NC_010322.1"/>
</dbReference>
<dbReference type="SMR" id="B0KI00"/>
<dbReference type="GeneID" id="83667429"/>
<dbReference type="KEGG" id="ppg:PputGB1_0273"/>
<dbReference type="eggNOG" id="COG0189">
    <property type="taxonomic scope" value="Bacteria"/>
</dbReference>
<dbReference type="HOGENOM" id="CLU_054353_0_1_6"/>
<dbReference type="Proteomes" id="UP000002157">
    <property type="component" value="Chromosome"/>
</dbReference>
<dbReference type="GO" id="GO:0005737">
    <property type="term" value="C:cytoplasm"/>
    <property type="evidence" value="ECO:0007669"/>
    <property type="project" value="TreeGrafter"/>
</dbReference>
<dbReference type="GO" id="GO:0005524">
    <property type="term" value="F:ATP binding"/>
    <property type="evidence" value="ECO:0007669"/>
    <property type="project" value="UniProtKB-UniRule"/>
</dbReference>
<dbReference type="GO" id="GO:0046872">
    <property type="term" value="F:metal ion binding"/>
    <property type="evidence" value="ECO:0007669"/>
    <property type="project" value="UniProtKB-KW"/>
</dbReference>
<dbReference type="GO" id="GO:0018169">
    <property type="term" value="F:ribosomal S6-glutamic acid ligase activity"/>
    <property type="evidence" value="ECO:0007669"/>
    <property type="project" value="TreeGrafter"/>
</dbReference>
<dbReference type="GO" id="GO:0036211">
    <property type="term" value="P:protein modification process"/>
    <property type="evidence" value="ECO:0007669"/>
    <property type="project" value="InterPro"/>
</dbReference>
<dbReference type="GO" id="GO:0009432">
    <property type="term" value="P:SOS response"/>
    <property type="evidence" value="ECO:0007669"/>
    <property type="project" value="TreeGrafter"/>
</dbReference>
<dbReference type="GO" id="GO:0006412">
    <property type="term" value="P:translation"/>
    <property type="evidence" value="ECO:0007669"/>
    <property type="project" value="UniProtKB-KW"/>
</dbReference>
<dbReference type="FunFam" id="3.40.50.20:FF:000004">
    <property type="entry name" value="Probable alpha-L-glutamate ligase"/>
    <property type="match status" value="1"/>
</dbReference>
<dbReference type="FunFam" id="3.30.1490.20:FF:000005">
    <property type="entry name" value="Probable alpha-L-glutamate ligase 1"/>
    <property type="match status" value="1"/>
</dbReference>
<dbReference type="FunFam" id="3.30.470.20:FF:000016">
    <property type="entry name" value="Ribosomal protein S6--L-glutamate ligase"/>
    <property type="match status" value="1"/>
</dbReference>
<dbReference type="Gene3D" id="3.40.50.20">
    <property type="match status" value="1"/>
</dbReference>
<dbReference type="Gene3D" id="3.30.1490.20">
    <property type="entry name" value="ATP-grasp fold, A domain"/>
    <property type="match status" value="1"/>
</dbReference>
<dbReference type="Gene3D" id="3.30.470.20">
    <property type="entry name" value="ATP-grasp fold, B domain"/>
    <property type="match status" value="1"/>
</dbReference>
<dbReference type="HAMAP" id="MF_01552">
    <property type="entry name" value="RimK"/>
    <property type="match status" value="1"/>
</dbReference>
<dbReference type="InterPro" id="IPR011761">
    <property type="entry name" value="ATP-grasp"/>
</dbReference>
<dbReference type="InterPro" id="IPR013651">
    <property type="entry name" value="ATP-grasp_RimK-type"/>
</dbReference>
<dbReference type="InterPro" id="IPR013815">
    <property type="entry name" value="ATP_grasp_subdomain_1"/>
</dbReference>
<dbReference type="InterPro" id="IPR023533">
    <property type="entry name" value="RimK"/>
</dbReference>
<dbReference type="InterPro" id="IPR041107">
    <property type="entry name" value="Rimk_N"/>
</dbReference>
<dbReference type="InterPro" id="IPR004666">
    <property type="entry name" value="Rp_bS6_RimK/Lys_biosynth_LsyX"/>
</dbReference>
<dbReference type="NCBIfam" id="NF007764">
    <property type="entry name" value="PRK10446.1"/>
    <property type="match status" value="1"/>
</dbReference>
<dbReference type="NCBIfam" id="TIGR00768">
    <property type="entry name" value="rimK_fam"/>
    <property type="match status" value="1"/>
</dbReference>
<dbReference type="PANTHER" id="PTHR21621:SF7">
    <property type="entry name" value="RIBOSOMAL PROTEIN BS6--L-GLUTAMATE LIGASE"/>
    <property type="match status" value="1"/>
</dbReference>
<dbReference type="PANTHER" id="PTHR21621">
    <property type="entry name" value="RIBOSOMAL PROTEIN S6 MODIFICATION PROTEIN"/>
    <property type="match status" value="1"/>
</dbReference>
<dbReference type="Pfam" id="PF08443">
    <property type="entry name" value="RimK"/>
    <property type="match status" value="1"/>
</dbReference>
<dbReference type="Pfam" id="PF18030">
    <property type="entry name" value="Rimk_N"/>
    <property type="match status" value="1"/>
</dbReference>
<dbReference type="SUPFAM" id="SSF56059">
    <property type="entry name" value="Glutathione synthetase ATP-binding domain-like"/>
    <property type="match status" value="1"/>
</dbReference>
<dbReference type="PROSITE" id="PS50975">
    <property type="entry name" value="ATP_GRASP"/>
    <property type="match status" value="1"/>
</dbReference>
<accession>B0KI00</accession>